<dbReference type="EMBL" id="U18778">
    <property type="protein sequence ID" value="AAB64539.1"/>
    <property type="molecule type" value="Genomic_DNA"/>
</dbReference>
<dbReference type="EMBL" id="BK006939">
    <property type="protein sequence ID" value="DAA07656.1"/>
    <property type="molecule type" value="Genomic_DNA"/>
</dbReference>
<dbReference type="PIR" id="S50464">
    <property type="entry name" value="S50464"/>
</dbReference>
<dbReference type="RefSeq" id="NP_010921.1">
    <property type="nucleotide sequence ID" value="NM_001178897.1"/>
</dbReference>
<dbReference type="PDB" id="3JCT">
    <property type="method" value="EM"/>
    <property type="resolution" value="3.08 A"/>
    <property type="chains" value="s=1-520"/>
</dbReference>
<dbReference type="PDB" id="6ELZ">
    <property type="method" value="EM"/>
    <property type="resolution" value="3.30 A"/>
    <property type="chains" value="s=1-520"/>
</dbReference>
<dbReference type="PDB" id="6EM1">
    <property type="method" value="EM"/>
    <property type="resolution" value="3.60 A"/>
    <property type="chains" value="s=1-520"/>
</dbReference>
<dbReference type="PDB" id="6EM5">
    <property type="method" value="EM"/>
    <property type="resolution" value="4.30 A"/>
    <property type="chains" value="s=1-520"/>
</dbReference>
<dbReference type="PDB" id="6FT6">
    <property type="method" value="EM"/>
    <property type="resolution" value="3.90 A"/>
    <property type="chains" value="s=1-520"/>
</dbReference>
<dbReference type="PDB" id="6M62">
    <property type="method" value="EM"/>
    <property type="resolution" value="3.20 A"/>
    <property type="chains" value="s=1-520"/>
</dbReference>
<dbReference type="PDB" id="6YLG">
    <property type="method" value="EM"/>
    <property type="resolution" value="3.00 A"/>
    <property type="chains" value="s=1-520"/>
</dbReference>
<dbReference type="PDB" id="6YLH">
    <property type="method" value="EM"/>
    <property type="resolution" value="3.10 A"/>
    <property type="chains" value="s=1-520"/>
</dbReference>
<dbReference type="PDB" id="6YLX">
    <property type="method" value="EM"/>
    <property type="resolution" value="3.90 A"/>
    <property type="chains" value="s=1-520"/>
</dbReference>
<dbReference type="PDB" id="6YLY">
    <property type="method" value="EM"/>
    <property type="resolution" value="3.80 A"/>
    <property type="chains" value="s=1-520"/>
</dbReference>
<dbReference type="PDB" id="7NAC">
    <property type="method" value="EM"/>
    <property type="resolution" value="3.04 A"/>
    <property type="chains" value="s=1-520"/>
</dbReference>
<dbReference type="PDB" id="7NAF">
    <property type="method" value="EM"/>
    <property type="resolution" value="3.13 A"/>
    <property type="chains" value="s=1-7"/>
</dbReference>
<dbReference type="PDB" id="7OH3">
    <property type="method" value="EM"/>
    <property type="resolution" value="3.40 A"/>
    <property type="chains" value="s=1-520"/>
</dbReference>
<dbReference type="PDB" id="7OHQ">
    <property type="method" value="EM"/>
    <property type="resolution" value="3.10 A"/>
    <property type="chains" value="s=1-520"/>
</dbReference>
<dbReference type="PDB" id="7OHR">
    <property type="method" value="EM"/>
    <property type="resolution" value="4.72 A"/>
    <property type="chains" value="s=1-520"/>
</dbReference>
<dbReference type="PDB" id="7R7A">
    <property type="method" value="EM"/>
    <property type="resolution" value="3.04 A"/>
    <property type="chains" value="s=1-520"/>
</dbReference>
<dbReference type="PDB" id="7U0H">
    <property type="method" value="EM"/>
    <property type="resolution" value="2.76 A"/>
    <property type="chains" value="s=1-520"/>
</dbReference>
<dbReference type="PDB" id="7UG6">
    <property type="method" value="EM"/>
    <property type="resolution" value="2.90 A"/>
    <property type="chains" value="s=1-520"/>
</dbReference>
<dbReference type="PDB" id="7UOO">
    <property type="method" value="EM"/>
    <property type="resolution" value="2.34 A"/>
    <property type="chains" value="s=1-520"/>
</dbReference>
<dbReference type="PDB" id="7UQB">
    <property type="method" value="EM"/>
    <property type="resolution" value="2.43 A"/>
    <property type="chains" value="s=1-77"/>
</dbReference>
<dbReference type="PDB" id="7UQZ">
    <property type="method" value="EM"/>
    <property type="resolution" value="2.44 A"/>
    <property type="chains" value="s=1-520"/>
</dbReference>
<dbReference type="PDB" id="7V08">
    <property type="method" value="EM"/>
    <property type="resolution" value="2.36 A"/>
    <property type="chains" value="s=1-520"/>
</dbReference>
<dbReference type="PDB" id="8V87">
    <property type="method" value="EM"/>
    <property type="resolution" value="2.66 A"/>
    <property type="chains" value="s=1-520"/>
</dbReference>
<dbReference type="PDBsum" id="3JCT"/>
<dbReference type="PDBsum" id="6ELZ"/>
<dbReference type="PDBsum" id="6EM1"/>
<dbReference type="PDBsum" id="6EM5"/>
<dbReference type="PDBsum" id="6FT6"/>
<dbReference type="PDBsum" id="6M62"/>
<dbReference type="PDBsum" id="6YLG"/>
<dbReference type="PDBsum" id="6YLH"/>
<dbReference type="PDBsum" id="6YLX"/>
<dbReference type="PDBsum" id="6YLY"/>
<dbReference type="PDBsum" id="7NAC"/>
<dbReference type="PDBsum" id="7NAF"/>
<dbReference type="PDBsum" id="7OH3"/>
<dbReference type="PDBsum" id="7OHQ"/>
<dbReference type="PDBsum" id="7OHR"/>
<dbReference type="PDBsum" id="7R7A"/>
<dbReference type="PDBsum" id="7U0H"/>
<dbReference type="PDBsum" id="7UG6"/>
<dbReference type="PDBsum" id="7UOO"/>
<dbReference type="PDBsum" id="7UQB"/>
<dbReference type="PDBsum" id="7UQZ"/>
<dbReference type="PDBsum" id="7V08"/>
<dbReference type="PDBsum" id="8V87"/>
<dbReference type="EMDB" id="EMD-10838"/>
<dbReference type="EMDB" id="EMD-10839"/>
<dbReference type="EMDB" id="EMD-10841"/>
<dbReference type="EMDB" id="EMD-10842"/>
<dbReference type="EMDB" id="EMD-12892"/>
<dbReference type="EMDB" id="EMD-12905"/>
<dbReference type="EMDB" id="EMD-12906"/>
<dbReference type="EMDB" id="EMD-24269"/>
<dbReference type="EMDB" id="EMD-24271"/>
<dbReference type="EMDB" id="EMD-24296"/>
<dbReference type="EMDB" id="EMD-26259"/>
<dbReference type="EMDB" id="EMD-26485"/>
<dbReference type="EMDB" id="EMD-26651"/>
<dbReference type="EMDB" id="EMD-26686"/>
<dbReference type="EMDB" id="EMD-26703"/>
<dbReference type="EMDB" id="EMD-26941"/>
<dbReference type="EMDB" id="EMD-30108"/>
<dbReference type="EMDB" id="EMD-4302"/>
<dbReference type="EMDB" id="EMD-43027"/>
<dbReference type="SMR" id="P40010"/>
<dbReference type="BioGRID" id="36736">
    <property type="interactions" value="296"/>
</dbReference>
<dbReference type="DIP" id="DIP-6291N"/>
<dbReference type="FunCoup" id="P40010">
    <property type="interactions" value="1311"/>
</dbReference>
<dbReference type="IntAct" id="P40010">
    <property type="interactions" value="115"/>
</dbReference>
<dbReference type="MINT" id="P40010"/>
<dbReference type="STRING" id="4932.YER006W"/>
<dbReference type="iPTMnet" id="P40010"/>
<dbReference type="PaxDb" id="4932-YER006W"/>
<dbReference type="PeptideAtlas" id="P40010"/>
<dbReference type="EnsemblFungi" id="YER006W_mRNA">
    <property type="protein sequence ID" value="YER006W"/>
    <property type="gene ID" value="YER006W"/>
</dbReference>
<dbReference type="GeneID" id="856723"/>
<dbReference type="KEGG" id="sce:YER006W"/>
<dbReference type="AGR" id="SGD:S000000808"/>
<dbReference type="SGD" id="S000000808">
    <property type="gene designation" value="NUG1"/>
</dbReference>
<dbReference type="VEuPathDB" id="FungiDB:YER006W"/>
<dbReference type="eggNOG" id="KOG2484">
    <property type="taxonomic scope" value="Eukaryota"/>
</dbReference>
<dbReference type="GeneTree" id="ENSGT00940000166920"/>
<dbReference type="HOGENOM" id="CLU_011106_5_5_1"/>
<dbReference type="InParanoid" id="P40010"/>
<dbReference type="OMA" id="FKLDGLW"/>
<dbReference type="OrthoDB" id="10266128at2759"/>
<dbReference type="BioCyc" id="YEAST:G3O-30193-MONOMER"/>
<dbReference type="Reactome" id="R-SCE-6791226">
    <property type="pathway name" value="Major pathway of rRNA processing in the nucleolus and cytosol"/>
</dbReference>
<dbReference type="BioGRID-ORCS" id="856723">
    <property type="hits" value="3 hits in 10 CRISPR screens"/>
</dbReference>
<dbReference type="CD-CODE" id="BDAE0F88">
    <property type="entry name" value="Nucleolus"/>
</dbReference>
<dbReference type="PRO" id="PR:P40010"/>
<dbReference type="Proteomes" id="UP000002311">
    <property type="component" value="Chromosome V"/>
</dbReference>
<dbReference type="RNAct" id="P40010">
    <property type="molecule type" value="protein"/>
</dbReference>
<dbReference type="GO" id="GO:0005730">
    <property type="term" value="C:nucleolus"/>
    <property type="evidence" value="ECO:0000314"/>
    <property type="project" value="SGD"/>
</dbReference>
<dbReference type="GO" id="GO:0005634">
    <property type="term" value="C:nucleus"/>
    <property type="evidence" value="ECO:0000314"/>
    <property type="project" value="SGD"/>
</dbReference>
<dbReference type="GO" id="GO:0030687">
    <property type="term" value="C:preribosome, large subunit precursor"/>
    <property type="evidence" value="ECO:0000316"/>
    <property type="project" value="SGD"/>
</dbReference>
<dbReference type="GO" id="GO:0005525">
    <property type="term" value="F:GTP binding"/>
    <property type="evidence" value="ECO:0007669"/>
    <property type="project" value="UniProtKB-KW"/>
</dbReference>
<dbReference type="GO" id="GO:0003924">
    <property type="term" value="F:GTPase activity"/>
    <property type="evidence" value="ECO:0000314"/>
    <property type="project" value="SGD"/>
</dbReference>
<dbReference type="GO" id="GO:0003729">
    <property type="term" value="F:mRNA binding"/>
    <property type="evidence" value="ECO:0007005"/>
    <property type="project" value="SGD"/>
</dbReference>
<dbReference type="GO" id="GO:0003723">
    <property type="term" value="F:RNA binding"/>
    <property type="evidence" value="ECO:0000314"/>
    <property type="project" value="SGD"/>
</dbReference>
<dbReference type="GO" id="GO:0000463">
    <property type="term" value="P:maturation of LSU-rRNA from tricistronic rRNA transcript (SSU-rRNA, 5.8S rRNA, LSU-rRNA)"/>
    <property type="evidence" value="ECO:0000315"/>
    <property type="project" value="SGD"/>
</dbReference>
<dbReference type="GO" id="GO:0015031">
    <property type="term" value="P:protein transport"/>
    <property type="evidence" value="ECO:0007669"/>
    <property type="project" value="UniProtKB-KW"/>
</dbReference>
<dbReference type="GO" id="GO:0000055">
    <property type="term" value="P:ribosomal large subunit export from nucleus"/>
    <property type="evidence" value="ECO:0000315"/>
    <property type="project" value="SGD"/>
</dbReference>
<dbReference type="CDD" id="cd04178">
    <property type="entry name" value="Nucleostemin_like"/>
    <property type="match status" value="1"/>
</dbReference>
<dbReference type="FunFam" id="1.10.1580.10:FF:000006">
    <property type="entry name" value="Nuclear GTP-binding protein NUG1"/>
    <property type="match status" value="1"/>
</dbReference>
<dbReference type="FunFam" id="3.40.50.300:FF:000844">
    <property type="entry name" value="Nuclear GTP-binding protein NUG1"/>
    <property type="match status" value="1"/>
</dbReference>
<dbReference type="Gene3D" id="1.10.1580.10">
    <property type="match status" value="1"/>
</dbReference>
<dbReference type="Gene3D" id="3.40.50.300">
    <property type="entry name" value="P-loop containing nucleotide triphosphate hydrolases"/>
    <property type="match status" value="1"/>
</dbReference>
<dbReference type="InterPro" id="IPR030378">
    <property type="entry name" value="G_CP_dom"/>
</dbReference>
<dbReference type="InterPro" id="IPR014813">
    <property type="entry name" value="Gnl3_N_dom"/>
</dbReference>
<dbReference type="InterPro" id="IPR006073">
    <property type="entry name" value="GTP-bd"/>
</dbReference>
<dbReference type="InterPro" id="IPR023179">
    <property type="entry name" value="GTP-bd_ortho_bundle_sf"/>
</dbReference>
<dbReference type="InterPro" id="IPR027417">
    <property type="entry name" value="P-loop_NTPase"/>
</dbReference>
<dbReference type="InterPro" id="IPR050755">
    <property type="entry name" value="TRAFAC_YlqF/YawG_RiboMat"/>
</dbReference>
<dbReference type="PANTHER" id="PTHR11089">
    <property type="entry name" value="GTP-BINDING PROTEIN-RELATED"/>
    <property type="match status" value="1"/>
</dbReference>
<dbReference type="PANTHER" id="PTHR11089:SF30">
    <property type="entry name" value="GUANINE NUCLEOTIDE-BINDING PROTEIN-LIKE 3 HOMOLOG"/>
    <property type="match status" value="1"/>
</dbReference>
<dbReference type="Pfam" id="PF08701">
    <property type="entry name" value="GN3L_Grn1"/>
    <property type="match status" value="1"/>
</dbReference>
<dbReference type="Pfam" id="PF01926">
    <property type="entry name" value="MMR_HSR1"/>
    <property type="match status" value="1"/>
</dbReference>
<dbReference type="SUPFAM" id="SSF52540">
    <property type="entry name" value="P-loop containing nucleoside triphosphate hydrolases"/>
    <property type="match status" value="1"/>
</dbReference>
<dbReference type="PROSITE" id="PS51721">
    <property type="entry name" value="G_CP"/>
    <property type="match status" value="1"/>
</dbReference>
<proteinExistence type="evidence at protein level"/>
<protein>
    <recommendedName>
        <fullName>Nuclear GTP-binding protein NUG1</fullName>
    </recommendedName>
    <alternativeName>
        <fullName>Nuclear GTPase 1</fullName>
    </alternativeName>
</protein>
<accession>P40010</accession>
<accession>D3DLQ2</accession>
<gene>
    <name type="primary">NUG1</name>
    <name type="ordered locus">YER006W</name>
</gene>
<reference key="1">
    <citation type="journal article" date="1997" name="Nature">
        <title>The nucleotide sequence of Saccharomyces cerevisiae chromosome V.</title>
        <authorList>
            <person name="Dietrich F.S."/>
            <person name="Mulligan J.T."/>
            <person name="Hennessy K.M."/>
            <person name="Yelton M.A."/>
            <person name="Allen E."/>
            <person name="Araujo R."/>
            <person name="Aviles E."/>
            <person name="Berno A."/>
            <person name="Brennan T."/>
            <person name="Carpenter J."/>
            <person name="Chen E."/>
            <person name="Cherry J.M."/>
            <person name="Chung E."/>
            <person name="Duncan M."/>
            <person name="Guzman E."/>
            <person name="Hartzell G."/>
            <person name="Hunicke-Smith S."/>
            <person name="Hyman R.W."/>
            <person name="Kayser A."/>
            <person name="Komp C."/>
            <person name="Lashkari D."/>
            <person name="Lew H."/>
            <person name="Lin D."/>
            <person name="Mosedale D."/>
            <person name="Nakahara K."/>
            <person name="Namath A."/>
            <person name="Norgren R."/>
            <person name="Oefner P."/>
            <person name="Oh C."/>
            <person name="Petel F.X."/>
            <person name="Roberts D."/>
            <person name="Sehl P."/>
            <person name="Schramm S."/>
            <person name="Shogren T."/>
            <person name="Smith V."/>
            <person name="Taylor P."/>
            <person name="Wei Y."/>
            <person name="Botstein D."/>
            <person name="Davis R.W."/>
        </authorList>
    </citation>
    <scope>NUCLEOTIDE SEQUENCE [LARGE SCALE GENOMIC DNA]</scope>
    <source>
        <strain>ATCC 204508 / S288c</strain>
    </source>
</reference>
<reference key="2">
    <citation type="journal article" date="2014" name="G3 (Bethesda)">
        <title>The reference genome sequence of Saccharomyces cerevisiae: Then and now.</title>
        <authorList>
            <person name="Engel S.R."/>
            <person name="Dietrich F.S."/>
            <person name="Fisk D.G."/>
            <person name="Binkley G."/>
            <person name="Balakrishnan R."/>
            <person name="Costanzo M.C."/>
            <person name="Dwight S.S."/>
            <person name="Hitz B.C."/>
            <person name="Karra K."/>
            <person name="Nash R.S."/>
            <person name="Weng S."/>
            <person name="Wong E.D."/>
            <person name="Lloyd P."/>
            <person name="Skrzypek M.S."/>
            <person name="Miyasato S.R."/>
            <person name="Simison M."/>
            <person name="Cherry J.M."/>
        </authorList>
    </citation>
    <scope>GENOME REANNOTATION</scope>
    <source>
        <strain>ATCC 204508 / S288c</strain>
    </source>
</reference>
<reference key="3">
    <citation type="journal article" date="2001" name="Mol. Cell">
        <title>Identification of a 60S preribosomal particle that is closely linked to nuclear export.</title>
        <authorList>
            <person name="Bassler J."/>
            <person name="Grandi P."/>
            <person name="Gadal O."/>
            <person name="Lessmann T."/>
            <person name="Petfalski E."/>
            <person name="Tollervey D."/>
            <person name="Lechner J."/>
            <person name="Hurt E."/>
        </authorList>
    </citation>
    <scope>FUNCTION</scope>
    <scope>SUBCELLULAR LOCATION</scope>
</reference>
<reference key="4">
    <citation type="journal article" date="2003" name="Nature">
        <title>Global analysis of protein expression in yeast.</title>
        <authorList>
            <person name="Ghaemmaghami S."/>
            <person name="Huh W.-K."/>
            <person name="Bower K."/>
            <person name="Howson R.W."/>
            <person name="Belle A."/>
            <person name="Dephoure N."/>
            <person name="O'Shea E.K."/>
            <person name="Weissman J.S."/>
        </authorList>
    </citation>
    <scope>LEVEL OF PROTEIN EXPRESSION [LARGE SCALE ANALYSIS]</scope>
</reference>
<reference key="5">
    <citation type="journal article" date="2008" name="Mol. Cell. Proteomics">
        <title>A multidimensional chromatography technology for in-depth phosphoproteome analysis.</title>
        <authorList>
            <person name="Albuquerque C.P."/>
            <person name="Smolka M.B."/>
            <person name="Payne S.H."/>
            <person name="Bafna V."/>
            <person name="Eng J."/>
            <person name="Zhou H."/>
        </authorList>
    </citation>
    <scope>IDENTIFICATION BY MASS SPECTROMETRY [LARGE SCALE ANALYSIS]</scope>
</reference>
<reference key="6">
    <citation type="journal article" date="2009" name="Science">
        <title>Global analysis of Cdk1 substrate phosphorylation sites provides insights into evolution.</title>
        <authorList>
            <person name="Holt L.J."/>
            <person name="Tuch B.B."/>
            <person name="Villen J."/>
            <person name="Johnson A.D."/>
            <person name="Gygi S.P."/>
            <person name="Morgan D.O."/>
        </authorList>
    </citation>
    <scope>PHOSPHORYLATION [LARGE SCALE ANALYSIS] AT SER-337</scope>
    <scope>IDENTIFICATION BY MASS SPECTROMETRY [LARGE SCALE ANALYSIS]</scope>
</reference>
<feature type="chain" id="PRO_0000122452" description="Nuclear GTP-binding protein NUG1">
    <location>
        <begin position="1"/>
        <end position="520"/>
    </location>
</feature>
<feature type="domain" description="CP-type G" evidence="2">
    <location>
        <begin position="165"/>
        <end position="343"/>
    </location>
</feature>
<feature type="region of interest" description="Disordered" evidence="3">
    <location>
        <begin position="1"/>
        <end position="53"/>
    </location>
</feature>
<feature type="compositionally biased region" description="Basic residues" evidence="3">
    <location>
        <begin position="1"/>
        <end position="13"/>
    </location>
</feature>
<feature type="compositionally biased region" description="Basic residues" evidence="3">
    <location>
        <begin position="21"/>
        <end position="34"/>
    </location>
</feature>
<feature type="compositionally biased region" description="Basic and acidic residues" evidence="3">
    <location>
        <begin position="35"/>
        <end position="48"/>
    </location>
</feature>
<feature type="binding site" evidence="1">
    <location>
        <begin position="213"/>
        <end position="216"/>
    </location>
    <ligand>
        <name>GTP</name>
        <dbReference type="ChEBI" id="CHEBI:37565"/>
    </ligand>
</feature>
<feature type="binding site" evidence="1">
    <location>
        <begin position="287"/>
        <end position="294"/>
    </location>
    <ligand>
        <name>GTP</name>
        <dbReference type="ChEBI" id="CHEBI:37565"/>
    </ligand>
</feature>
<feature type="binding site" evidence="1">
    <location>
        <begin position="336"/>
        <end position="339"/>
    </location>
    <ligand>
        <name>GTP</name>
        <dbReference type="ChEBI" id="CHEBI:37565"/>
    </ligand>
</feature>
<feature type="modified residue" description="Phosphoserine" evidence="6">
    <location>
        <position position="337"/>
    </location>
</feature>
<sequence>MRVRKRQSRRTSTKLKEGIKKKASAHRKKEKKMAKKDVTWRSRSKKDPGIPSNFPYKAKILEEIEAKKMKDLEERELAKQQRLEARKAAKEQGVDAMDEDMIEDDENGLAALVESAQQAAAEYEGTPSNDADVRDDELDVIDYNIDFYGEDVEGESELEKSRKAYDKIFKSVIDASDVILYVLDARDPESTRSRKVEEAVLQSQGKRLILILNKVDLIPPHVLEQWLNYLKSSFPTIPLRASSGAVNGTSFNRKLSQTTTASALLESLKTYSNNSNLKRSIVVGVIGYPNVGKSSVINALLARRGGQSKACPVGNEAGVTTSLREIKIDNKLKILDSPGICFPSENKKRSKVEHEAELALLNALPAKHIVDPYPAVLMLVKRLAKSDEMTESFKKLYEIPPIPANDADTFTKHFLIHVARKRGRLGKGGIPNLASAGLSVLNDWRDGKILGWVLPNTSAAASQQDKQNLSTINTGTKQAPIAANESTIVSEWSKEFDLDGLFSSLDKAIDASKDQDTMME</sequence>
<organism>
    <name type="scientific">Saccharomyces cerevisiae (strain ATCC 204508 / S288c)</name>
    <name type="common">Baker's yeast</name>
    <dbReference type="NCBI Taxonomy" id="559292"/>
    <lineage>
        <taxon>Eukaryota</taxon>
        <taxon>Fungi</taxon>
        <taxon>Dikarya</taxon>
        <taxon>Ascomycota</taxon>
        <taxon>Saccharomycotina</taxon>
        <taxon>Saccharomycetes</taxon>
        <taxon>Saccharomycetales</taxon>
        <taxon>Saccharomycetaceae</taxon>
        <taxon>Saccharomyces</taxon>
    </lineage>
</organism>
<comment type="function">
    <text evidence="4">GTPase required for 60S ribosomal subunit export to the cytoplasm.</text>
</comment>
<comment type="interaction">
    <interactant intactId="EBI-22449">
        <id>P40010</id>
    </interactant>
    <interactant intactId="EBI-23731">
        <id>P53188</id>
        <label>CGR1</label>
    </interactant>
    <organismsDiffer>false</organismsDiffer>
    <experiments>3</experiments>
</comment>
<comment type="interaction">
    <interactant intactId="EBI-22449">
        <id>P40010</id>
    </interactant>
    <interactant intactId="EBI-6289">
        <id>P36049</id>
        <label>EBP2</label>
    </interactant>
    <organismsDiffer>false</organismsDiffer>
    <experiments>3</experiments>
</comment>
<comment type="interaction">
    <interactant intactId="EBI-22449">
        <id>P40010</id>
    </interactant>
    <interactant intactId="EBI-22906">
        <id>P43586</id>
        <label>LOC1</label>
    </interactant>
    <organismsDiffer>false</organismsDiffer>
    <experiments>5</experiments>
</comment>
<comment type="interaction">
    <interactant intactId="EBI-22449">
        <id>P40010</id>
    </interactant>
    <interactant intactId="EBI-12122">
        <id>P37838</id>
        <label>NOP4</label>
    </interactant>
    <organismsDiffer>false</organismsDiffer>
    <experiments>4</experiments>
</comment>
<comment type="interaction">
    <interactant intactId="EBI-22449">
        <id>P40010</id>
    </interactant>
    <interactant intactId="EBI-15881">
        <id>P36160</id>
        <label>RPF2</label>
    </interactant>
    <organismsDiffer>false</organismsDiffer>
    <experiments>7</experiments>
</comment>
<comment type="subcellular location">
    <subcellularLocation>
        <location evidence="4">Nucleus</location>
    </subcellularLocation>
</comment>
<comment type="domain">
    <text>In contrast to other GTP-binding proteins, this family is characterized by a circular permutation of the GTPase motifs described by a G4-G1-G3 pattern.</text>
</comment>
<comment type="miscellaneous">
    <text evidence="5">Present with 7130 molecules/cell in log phase SD medium.</text>
</comment>
<comment type="similarity">
    <text evidence="2">Belongs to the TRAFAC class YlqF/YawG GTPase family.</text>
</comment>
<evidence type="ECO:0000255" key="1"/>
<evidence type="ECO:0000255" key="2">
    <source>
        <dbReference type="PROSITE-ProRule" id="PRU01058"/>
    </source>
</evidence>
<evidence type="ECO:0000256" key="3">
    <source>
        <dbReference type="SAM" id="MobiDB-lite"/>
    </source>
</evidence>
<evidence type="ECO:0000269" key="4">
    <source>
    </source>
</evidence>
<evidence type="ECO:0000269" key="5">
    <source>
    </source>
</evidence>
<evidence type="ECO:0007744" key="6">
    <source>
    </source>
</evidence>
<keyword id="KW-0002">3D-structure</keyword>
<keyword id="KW-0342">GTP-binding</keyword>
<keyword id="KW-0547">Nucleotide-binding</keyword>
<keyword id="KW-0539">Nucleus</keyword>
<keyword id="KW-0597">Phosphoprotein</keyword>
<keyword id="KW-0653">Protein transport</keyword>
<keyword id="KW-1185">Reference proteome</keyword>
<keyword id="KW-0690">Ribosome biogenesis</keyword>
<keyword id="KW-0813">Transport</keyword>
<name>NUG1_YEAST</name>